<sequence length="206" mass="22994">MELKLLNENGQEGAVVNASDVVFGRDYNEALIHQVVVAYQANARQGNRAQKDREQVKHTTKKPWRQKGTGRARAGMSSSPLWRGGGRIFPNSPEENFSHKVNKKMHRAGLCSIFSQLAREGRLSVVEDIILEAPKTKLLADKFKTMGLDSVLIITDTVDENLYLASRNLPHVAIVEPRYADPLSLIYFKKVLVTKAAVAQIEELLS</sequence>
<accession>Q1BRU9</accession>
<proteinExistence type="inferred from homology"/>
<comment type="function">
    <text evidence="1">One of the primary rRNA binding proteins, this protein initially binds near the 5'-end of the 23S rRNA. It is important during the early stages of 50S assembly. It makes multiple contacts with different domains of the 23S rRNA in the assembled 50S subunit and ribosome.</text>
</comment>
<comment type="function">
    <text evidence="1">Forms part of the polypeptide exit tunnel.</text>
</comment>
<comment type="subunit">
    <text evidence="1">Part of the 50S ribosomal subunit.</text>
</comment>
<comment type="similarity">
    <text evidence="1">Belongs to the universal ribosomal protein uL4 family.</text>
</comment>
<feature type="chain" id="PRO_1000052364" description="Large ribosomal subunit protein uL4">
    <location>
        <begin position="1"/>
        <end position="206"/>
    </location>
</feature>
<feature type="region of interest" description="Disordered" evidence="2">
    <location>
        <begin position="45"/>
        <end position="78"/>
    </location>
</feature>
<feature type="compositionally biased region" description="Basic residues" evidence="2">
    <location>
        <begin position="58"/>
        <end position="70"/>
    </location>
</feature>
<gene>
    <name evidence="1" type="primary">rplD</name>
    <name type="ordered locus">Bcen_2758</name>
</gene>
<protein>
    <recommendedName>
        <fullName evidence="1">Large ribosomal subunit protein uL4</fullName>
    </recommendedName>
    <alternativeName>
        <fullName evidence="3">50S ribosomal protein L4</fullName>
    </alternativeName>
</protein>
<reference key="1">
    <citation type="submission" date="2006-05" db="EMBL/GenBank/DDBJ databases">
        <title>Complete sequence of chromosome 1 of Burkholderia cenocepacia AU 1054.</title>
        <authorList>
            <consortium name="US DOE Joint Genome Institute"/>
            <person name="Copeland A."/>
            <person name="Lucas S."/>
            <person name="Lapidus A."/>
            <person name="Barry K."/>
            <person name="Detter J.C."/>
            <person name="Glavina del Rio T."/>
            <person name="Hammon N."/>
            <person name="Israni S."/>
            <person name="Dalin E."/>
            <person name="Tice H."/>
            <person name="Pitluck S."/>
            <person name="Chain P."/>
            <person name="Malfatti S."/>
            <person name="Shin M."/>
            <person name="Vergez L."/>
            <person name="Schmutz J."/>
            <person name="Larimer F."/>
            <person name="Land M."/>
            <person name="Hauser L."/>
            <person name="Kyrpides N."/>
            <person name="Lykidis A."/>
            <person name="LiPuma J.J."/>
            <person name="Konstantinidis K."/>
            <person name="Tiedje J.M."/>
            <person name="Richardson P."/>
        </authorList>
    </citation>
    <scope>NUCLEOTIDE SEQUENCE [LARGE SCALE GENOMIC DNA]</scope>
    <source>
        <strain>AU 1054</strain>
    </source>
</reference>
<name>RL4_BURO1</name>
<dbReference type="EMBL" id="CP000378">
    <property type="protein sequence ID" value="ABF77656.1"/>
    <property type="molecule type" value="Genomic_DNA"/>
</dbReference>
<dbReference type="SMR" id="Q1BRU9"/>
<dbReference type="HOGENOM" id="CLU_041575_5_2_4"/>
<dbReference type="GO" id="GO:1990904">
    <property type="term" value="C:ribonucleoprotein complex"/>
    <property type="evidence" value="ECO:0007669"/>
    <property type="project" value="UniProtKB-KW"/>
</dbReference>
<dbReference type="GO" id="GO:0005840">
    <property type="term" value="C:ribosome"/>
    <property type="evidence" value="ECO:0007669"/>
    <property type="project" value="UniProtKB-KW"/>
</dbReference>
<dbReference type="GO" id="GO:0019843">
    <property type="term" value="F:rRNA binding"/>
    <property type="evidence" value="ECO:0007669"/>
    <property type="project" value="UniProtKB-UniRule"/>
</dbReference>
<dbReference type="GO" id="GO:0003735">
    <property type="term" value="F:structural constituent of ribosome"/>
    <property type="evidence" value="ECO:0007669"/>
    <property type="project" value="InterPro"/>
</dbReference>
<dbReference type="GO" id="GO:0006412">
    <property type="term" value="P:translation"/>
    <property type="evidence" value="ECO:0007669"/>
    <property type="project" value="UniProtKB-UniRule"/>
</dbReference>
<dbReference type="Gene3D" id="3.40.1370.10">
    <property type="match status" value="1"/>
</dbReference>
<dbReference type="HAMAP" id="MF_01328_B">
    <property type="entry name" value="Ribosomal_uL4_B"/>
    <property type="match status" value="1"/>
</dbReference>
<dbReference type="InterPro" id="IPR002136">
    <property type="entry name" value="Ribosomal_uL4"/>
</dbReference>
<dbReference type="InterPro" id="IPR013005">
    <property type="entry name" value="Ribosomal_uL4-like"/>
</dbReference>
<dbReference type="InterPro" id="IPR023574">
    <property type="entry name" value="Ribosomal_uL4_dom_sf"/>
</dbReference>
<dbReference type="NCBIfam" id="TIGR03953">
    <property type="entry name" value="rplD_bact"/>
    <property type="match status" value="1"/>
</dbReference>
<dbReference type="PANTHER" id="PTHR10746">
    <property type="entry name" value="50S RIBOSOMAL PROTEIN L4"/>
    <property type="match status" value="1"/>
</dbReference>
<dbReference type="PANTHER" id="PTHR10746:SF6">
    <property type="entry name" value="LARGE RIBOSOMAL SUBUNIT PROTEIN UL4M"/>
    <property type="match status" value="1"/>
</dbReference>
<dbReference type="Pfam" id="PF00573">
    <property type="entry name" value="Ribosomal_L4"/>
    <property type="match status" value="1"/>
</dbReference>
<dbReference type="SUPFAM" id="SSF52166">
    <property type="entry name" value="Ribosomal protein L4"/>
    <property type="match status" value="1"/>
</dbReference>
<evidence type="ECO:0000255" key="1">
    <source>
        <dbReference type="HAMAP-Rule" id="MF_01328"/>
    </source>
</evidence>
<evidence type="ECO:0000256" key="2">
    <source>
        <dbReference type="SAM" id="MobiDB-lite"/>
    </source>
</evidence>
<evidence type="ECO:0000305" key="3"/>
<keyword id="KW-0687">Ribonucleoprotein</keyword>
<keyword id="KW-0689">Ribosomal protein</keyword>
<keyword id="KW-0694">RNA-binding</keyword>
<keyword id="KW-0699">rRNA-binding</keyword>
<organism>
    <name type="scientific">Burkholderia orbicola (strain AU 1054)</name>
    <dbReference type="NCBI Taxonomy" id="331271"/>
    <lineage>
        <taxon>Bacteria</taxon>
        <taxon>Pseudomonadati</taxon>
        <taxon>Pseudomonadota</taxon>
        <taxon>Betaproteobacteria</taxon>
        <taxon>Burkholderiales</taxon>
        <taxon>Burkholderiaceae</taxon>
        <taxon>Burkholderia</taxon>
        <taxon>Burkholderia cepacia complex</taxon>
        <taxon>Burkholderia orbicola</taxon>
    </lineage>
</organism>